<comment type="function">
    <text evidence="1">Catalyzes the decarboxylation of four acetate groups of uroporphyrinogen-III to yield coproporphyrinogen-III.</text>
</comment>
<comment type="catalytic activity">
    <reaction evidence="1">
        <text>uroporphyrinogen III + 4 H(+) = coproporphyrinogen III + 4 CO2</text>
        <dbReference type="Rhea" id="RHEA:19865"/>
        <dbReference type="ChEBI" id="CHEBI:15378"/>
        <dbReference type="ChEBI" id="CHEBI:16526"/>
        <dbReference type="ChEBI" id="CHEBI:57308"/>
        <dbReference type="ChEBI" id="CHEBI:57309"/>
        <dbReference type="EC" id="4.1.1.37"/>
    </reaction>
</comment>
<comment type="pathway">
    <text evidence="1">Porphyrin-containing compound metabolism; protoporphyrin-IX biosynthesis; coproporphyrinogen-III from 5-aminolevulinate: step 4/4.</text>
</comment>
<comment type="subunit">
    <text evidence="1">Homodimer.</text>
</comment>
<comment type="subcellular location">
    <subcellularLocation>
        <location evidence="1">Cytoplasm</location>
    </subcellularLocation>
</comment>
<comment type="similarity">
    <text evidence="1">Belongs to the uroporphyrinogen decarboxylase family.</text>
</comment>
<feature type="chain" id="PRO_1000100005" description="Uroporphyrinogen decarboxylase">
    <location>
        <begin position="1"/>
        <end position="351"/>
    </location>
</feature>
<feature type="binding site" evidence="1">
    <location>
        <begin position="25"/>
        <end position="29"/>
    </location>
    <ligand>
        <name>substrate</name>
    </ligand>
</feature>
<feature type="binding site" evidence="1">
    <location>
        <position position="74"/>
    </location>
    <ligand>
        <name>substrate</name>
    </ligand>
</feature>
<feature type="binding site" evidence="1">
    <location>
        <position position="151"/>
    </location>
    <ligand>
        <name>substrate</name>
    </ligand>
</feature>
<feature type="binding site" evidence="1">
    <location>
        <position position="206"/>
    </location>
    <ligand>
        <name>substrate</name>
    </ligand>
</feature>
<feature type="binding site" evidence="1">
    <location>
        <position position="325"/>
    </location>
    <ligand>
        <name>substrate</name>
    </ligand>
</feature>
<feature type="site" description="Transition state stabilizer" evidence="1">
    <location>
        <position position="74"/>
    </location>
</feature>
<protein>
    <recommendedName>
        <fullName evidence="1">Uroporphyrinogen decarboxylase</fullName>
        <shortName evidence="1">UPD</shortName>
        <shortName evidence="1">URO-D</shortName>
        <ecNumber evidence="1">4.1.1.37</ecNumber>
    </recommendedName>
</protein>
<sequence>MLKNDLFLRALKRQPCSRTPIWVMRQAGRYLPEYRAVREKTDFLTLCKTPELATEVTIQPVELMGVDAAIIFSDILVVNEAMGMNVEIIESKGIKLTPPIRSQADIDKLIVPDIDEKLGYVLDALRMTKRELDNRVPLIGFTGAAWTLFTYAVEGGGSKNYAYAKKMMYREPAMAHALLGKISGVITAYVLKQIEAGADAIQIFDSWASALSEDDYREYALPYIKDTVQAIKAKYPDTPVIVFSKDCNTILSDIADTGCEAMGLGWGIDIGKARAELGDRVALQGNLDPTVLYGTPDRIKAEASKILKSFGQHTEHSGHVFNLGHGILPDMDPENLKLLVEFVKEESAQYH</sequence>
<dbReference type="EC" id="4.1.1.37" evidence="1"/>
<dbReference type="EMBL" id="CP001110">
    <property type="protein sequence ID" value="ACF44872.1"/>
    <property type="molecule type" value="Genomic_DNA"/>
</dbReference>
<dbReference type="RefSeq" id="WP_012509344.1">
    <property type="nucleotide sequence ID" value="NC_011060.1"/>
</dbReference>
<dbReference type="SMR" id="B4SGD6"/>
<dbReference type="STRING" id="324925.Ppha_2714"/>
<dbReference type="KEGG" id="pph:Ppha_2714"/>
<dbReference type="eggNOG" id="COG0407">
    <property type="taxonomic scope" value="Bacteria"/>
</dbReference>
<dbReference type="HOGENOM" id="CLU_040933_0_0_10"/>
<dbReference type="OrthoDB" id="9806656at2"/>
<dbReference type="UniPathway" id="UPA00251">
    <property type="reaction ID" value="UER00321"/>
</dbReference>
<dbReference type="Proteomes" id="UP000002724">
    <property type="component" value="Chromosome"/>
</dbReference>
<dbReference type="GO" id="GO:0005829">
    <property type="term" value="C:cytosol"/>
    <property type="evidence" value="ECO:0007669"/>
    <property type="project" value="TreeGrafter"/>
</dbReference>
<dbReference type="GO" id="GO:0004853">
    <property type="term" value="F:uroporphyrinogen decarboxylase activity"/>
    <property type="evidence" value="ECO:0007669"/>
    <property type="project" value="UniProtKB-UniRule"/>
</dbReference>
<dbReference type="GO" id="GO:0006782">
    <property type="term" value="P:protoporphyrinogen IX biosynthetic process"/>
    <property type="evidence" value="ECO:0007669"/>
    <property type="project" value="UniProtKB-UniRule"/>
</dbReference>
<dbReference type="CDD" id="cd00717">
    <property type="entry name" value="URO-D"/>
    <property type="match status" value="1"/>
</dbReference>
<dbReference type="FunFam" id="3.20.20.210:FF:000001">
    <property type="entry name" value="Uroporphyrinogen decarboxylase"/>
    <property type="match status" value="1"/>
</dbReference>
<dbReference type="Gene3D" id="3.20.20.210">
    <property type="match status" value="1"/>
</dbReference>
<dbReference type="HAMAP" id="MF_00218">
    <property type="entry name" value="URO_D"/>
    <property type="match status" value="1"/>
</dbReference>
<dbReference type="InterPro" id="IPR038071">
    <property type="entry name" value="UROD/MetE-like_sf"/>
</dbReference>
<dbReference type="InterPro" id="IPR006361">
    <property type="entry name" value="Uroporphyrinogen_deCO2ase_HemE"/>
</dbReference>
<dbReference type="InterPro" id="IPR000257">
    <property type="entry name" value="Uroporphyrinogen_deCOase"/>
</dbReference>
<dbReference type="NCBIfam" id="TIGR01464">
    <property type="entry name" value="hemE"/>
    <property type="match status" value="1"/>
</dbReference>
<dbReference type="PANTHER" id="PTHR21091">
    <property type="entry name" value="METHYLTETRAHYDROFOLATE:HOMOCYSTEINE METHYLTRANSFERASE RELATED"/>
    <property type="match status" value="1"/>
</dbReference>
<dbReference type="PANTHER" id="PTHR21091:SF169">
    <property type="entry name" value="UROPORPHYRINOGEN DECARBOXYLASE"/>
    <property type="match status" value="1"/>
</dbReference>
<dbReference type="Pfam" id="PF01208">
    <property type="entry name" value="URO-D"/>
    <property type="match status" value="1"/>
</dbReference>
<dbReference type="SUPFAM" id="SSF51726">
    <property type="entry name" value="UROD/MetE-like"/>
    <property type="match status" value="1"/>
</dbReference>
<dbReference type="PROSITE" id="PS00906">
    <property type="entry name" value="UROD_1"/>
    <property type="match status" value="1"/>
</dbReference>
<dbReference type="PROSITE" id="PS00907">
    <property type="entry name" value="UROD_2"/>
    <property type="match status" value="1"/>
</dbReference>
<accession>B4SGD6</accession>
<proteinExistence type="inferred from homology"/>
<evidence type="ECO:0000255" key="1">
    <source>
        <dbReference type="HAMAP-Rule" id="MF_00218"/>
    </source>
</evidence>
<keyword id="KW-0963">Cytoplasm</keyword>
<keyword id="KW-0210">Decarboxylase</keyword>
<keyword id="KW-0456">Lyase</keyword>
<keyword id="KW-0627">Porphyrin biosynthesis</keyword>
<keyword id="KW-1185">Reference proteome</keyword>
<organism>
    <name type="scientific">Pelodictyon phaeoclathratiforme (strain DSM 5477 / BU-1)</name>
    <dbReference type="NCBI Taxonomy" id="324925"/>
    <lineage>
        <taxon>Bacteria</taxon>
        <taxon>Pseudomonadati</taxon>
        <taxon>Chlorobiota</taxon>
        <taxon>Chlorobiia</taxon>
        <taxon>Chlorobiales</taxon>
        <taxon>Chlorobiaceae</taxon>
        <taxon>Chlorobium/Pelodictyon group</taxon>
        <taxon>Pelodictyon</taxon>
    </lineage>
</organism>
<name>DCUP_PELPB</name>
<gene>
    <name evidence="1" type="primary">hemE</name>
    <name type="ordered locus">Ppha_2714</name>
</gene>
<reference key="1">
    <citation type="submission" date="2008-06" db="EMBL/GenBank/DDBJ databases">
        <title>Complete sequence of Pelodictyon phaeoclathratiforme BU-1.</title>
        <authorList>
            <consortium name="US DOE Joint Genome Institute"/>
            <person name="Lucas S."/>
            <person name="Copeland A."/>
            <person name="Lapidus A."/>
            <person name="Glavina del Rio T."/>
            <person name="Dalin E."/>
            <person name="Tice H."/>
            <person name="Bruce D."/>
            <person name="Goodwin L."/>
            <person name="Pitluck S."/>
            <person name="Schmutz J."/>
            <person name="Larimer F."/>
            <person name="Land M."/>
            <person name="Hauser L."/>
            <person name="Kyrpides N."/>
            <person name="Mikhailova N."/>
            <person name="Liu Z."/>
            <person name="Li T."/>
            <person name="Zhao F."/>
            <person name="Overmann J."/>
            <person name="Bryant D.A."/>
            <person name="Richardson P."/>
        </authorList>
    </citation>
    <scope>NUCLEOTIDE SEQUENCE [LARGE SCALE GENOMIC DNA]</scope>
    <source>
        <strain>DSM 5477 / BU-1</strain>
    </source>
</reference>